<name>ARNT_YERE8</name>
<comment type="function">
    <text evidence="1">Catalyzes the transfer of the L-Ara4N moiety of the glycolipid undecaprenyl phosphate-alpha-L-Ara4N to lipid A. The modified arabinose is attached to lipid A and is required for resistance to polymyxin and cationic antimicrobial peptides.</text>
</comment>
<comment type="catalytic activity">
    <reaction evidence="1">
        <text>4-amino-4-deoxy-alpha-L-arabinopyranosyl di-trans,octa-cis-undecaprenyl phosphate + lipid IVA = lipid IIA + di-trans,octa-cis-undecaprenyl phosphate.</text>
        <dbReference type="EC" id="2.4.2.43"/>
    </reaction>
</comment>
<comment type="pathway">
    <text evidence="1">Lipopolysaccharide metabolism; 4-amino-4-deoxy-beta-L-arabinose-lipid A biosynthesis.</text>
</comment>
<comment type="subcellular location">
    <subcellularLocation>
        <location evidence="1">Cell inner membrane</location>
        <topology evidence="1">Multi-pass membrane protein</topology>
    </subcellularLocation>
</comment>
<comment type="similarity">
    <text evidence="1">Belongs to the glycosyltransferase 83 family.</text>
</comment>
<gene>
    <name evidence="1" type="primary">arnT</name>
    <name type="ordered locus">YE2188</name>
</gene>
<reference key="1">
    <citation type="journal article" date="2006" name="PLoS Genet.">
        <title>The complete genome sequence and comparative genome analysis of the high pathogenicity Yersinia enterocolitica strain 8081.</title>
        <authorList>
            <person name="Thomson N.R."/>
            <person name="Howard S."/>
            <person name="Wren B.W."/>
            <person name="Holden M.T.G."/>
            <person name="Crossman L."/>
            <person name="Challis G.L."/>
            <person name="Churcher C."/>
            <person name="Mungall K."/>
            <person name="Brooks K."/>
            <person name="Chillingworth T."/>
            <person name="Feltwell T."/>
            <person name="Abdellah Z."/>
            <person name="Hauser H."/>
            <person name="Jagels K."/>
            <person name="Maddison M."/>
            <person name="Moule S."/>
            <person name="Sanders M."/>
            <person name="Whitehead S."/>
            <person name="Quail M.A."/>
            <person name="Dougan G."/>
            <person name="Parkhill J."/>
            <person name="Prentice M.B."/>
        </authorList>
    </citation>
    <scope>NUCLEOTIDE SEQUENCE [LARGE SCALE GENOMIC DNA]</scope>
    <source>
        <strain>NCTC 13174 / 8081</strain>
    </source>
</reference>
<sequence length="554" mass="62340">MKLLKGSGAALLALFFALVYLLPINSRLLWQPDETRYAEISREMLQRGDWVVPHLLGIRYFEKPIAGYWFNNISQWIFGDTNFAVRFGSIFSTALSAVFVYWLATLLWRNRSTSFLAALIYLSMLLVFSIGSYAVLDPMISLWLTASMVCFYLTLRAETAKQKIGAYLLLGLACGMGFMTKGFLALAVPVISVLPIVIQQKRVKELIIFGPIAIVGAVILSLPWALAIAQREPDFWHYFFWVEHIQRFAEKDAQHKAPIWYYLPILCLGVLPWLGLLPAALLKGWRERVARPELFFLLSWVLMPLIFFSVAKGKLPTYILPCMAPLSLLMAAYATDCANKMHMRALKVNGAINLIFGFICALAILVIGMGWVGHLVAYGPQEHQKVILATIAFAGWGIVGFATMRNNARHWHWAAACPLLFILLVGYLIPQQVIDSKQPQNFIQNNFNELSSSRYVATDSVGVAAGLAWELKRSDILMFSEKGELSYGLNYADSGDHYISAQDFSDWLVHARQKGDVSLVIQLSRNEKIPDSLPAADKVSLMNRLALLWYKKTP</sequence>
<keyword id="KW-0997">Cell inner membrane</keyword>
<keyword id="KW-1003">Cell membrane</keyword>
<keyword id="KW-0328">Glycosyltransferase</keyword>
<keyword id="KW-0441">Lipid A biosynthesis</keyword>
<keyword id="KW-0444">Lipid biosynthesis</keyword>
<keyword id="KW-0443">Lipid metabolism</keyword>
<keyword id="KW-0448">Lipopolysaccharide biosynthesis</keyword>
<keyword id="KW-0472">Membrane</keyword>
<keyword id="KW-0808">Transferase</keyword>
<keyword id="KW-0812">Transmembrane</keyword>
<keyword id="KW-1133">Transmembrane helix</keyword>
<dbReference type="EC" id="2.4.2.43" evidence="1"/>
<dbReference type="EMBL" id="AM286415">
    <property type="protein sequence ID" value="CAL12258.1"/>
    <property type="molecule type" value="Genomic_DNA"/>
</dbReference>
<dbReference type="RefSeq" id="WP_005169390.1">
    <property type="nucleotide sequence ID" value="NC_008800.1"/>
</dbReference>
<dbReference type="RefSeq" id="YP_001006428.1">
    <property type="nucleotide sequence ID" value="NC_008800.1"/>
</dbReference>
<dbReference type="SMR" id="A1JPM4"/>
<dbReference type="CAZy" id="GT83">
    <property type="family name" value="Glycosyltransferase Family 83"/>
</dbReference>
<dbReference type="KEGG" id="yen:YE2188"/>
<dbReference type="PATRIC" id="fig|393305.7.peg.2353"/>
<dbReference type="eggNOG" id="COG1807">
    <property type="taxonomic scope" value="Bacteria"/>
</dbReference>
<dbReference type="HOGENOM" id="CLU_019200_2_1_6"/>
<dbReference type="OrthoDB" id="9775035at2"/>
<dbReference type="UniPathway" id="UPA00037"/>
<dbReference type="Proteomes" id="UP000000642">
    <property type="component" value="Chromosome"/>
</dbReference>
<dbReference type="GO" id="GO:0005886">
    <property type="term" value="C:plasma membrane"/>
    <property type="evidence" value="ECO:0007669"/>
    <property type="project" value="UniProtKB-SubCell"/>
</dbReference>
<dbReference type="GO" id="GO:0103015">
    <property type="term" value="F:4-amino-4-deoxy-L-arabinose transferase activity"/>
    <property type="evidence" value="ECO:0007669"/>
    <property type="project" value="UniProtKB-EC"/>
</dbReference>
<dbReference type="GO" id="GO:0000030">
    <property type="term" value="F:mannosyltransferase activity"/>
    <property type="evidence" value="ECO:0007669"/>
    <property type="project" value="InterPro"/>
</dbReference>
<dbReference type="GO" id="GO:0009245">
    <property type="term" value="P:lipid A biosynthetic process"/>
    <property type="evidence" value="ECO:0007669"/>
    <property type="project" value="UniProtKB-UniRule"/>
</dbReference>
<dbReference type="GO" id="GO:0009103">
    <property type="term" value="P:lipopolysaccharide biosynthetic process"/>
    <property type="evidence" value="ECO:0007669"/>
    <property type="project" value="UniProtKB-KW"/>
</dbReference>
<dbReference type="GO" id="GO:0006493">
    <property type="term" value="P:protein O-linked glycosylation"/>
    <property type="evidence" value="ECO:0007669"/>
    <property type="project" value="InterPro"/>
</dbReference>
<dbReference type="GO" id="GO:0010041">
    <property type="term" value="P:response to iron(III) ion"/>
    <property type="evidence" value="ECO:0007669"/>
    <property type="project" value="TreeGrafter"/>
</dbReference>
<dbReference type="HAMAP" id="MF_01165">
    <property type="entry name" value="ArnT_transfer"/>
    <property type="match status" value="1"/>
</dbReference>
<dbReference type="InterPro" id="IPR022839">
    <property type="entry name" value="ArnT_tfrase"/>
</dbReference>
<dbReference type="InterPro" id="IPR003342">
    <property type="entry name" value="Glyco_trans_39/83"/>
</dbReference>
<dbReference type="InterPro" id="IPR050297">
    <property type="entry name" value="LipidA_mod_glycosyltrf_83"/>
</dbReference>
<dbReference type="NCBIfam" id="NF009784">
    <property type="entry name" value="PRK13279.1"/>
    <property type="match status" value="1"/>
</dbReference>
<dbReference type="PANTHER" id="PTHR33908">
    <property type="entry name" value="MANNOSYLTRANSFERASE YKCB-RELATED"/>
    <property type="match status" value="1"/>
</dbReference>
<dbReference type="PANTHER" id="PTHR33908:SF3">
    <property type="entry name" value="UNDECAPRENYL PHOSPHATE-ALPHA-4-AMINO-4-DEOXY-L-ARABINOSE ARABINOSYL TRANSFERASE"/>
    <property type="match status" value="1"/>
</dbReference>
<dbReference type="Pfam" id="PF02366">
    <property type="entry name" value="PMT"/>
    <property type="match status" value="1"/>
</dbReference>
<protein>
    <recommendedName>
        <fullName evidence="1">Undecaprenyl phosphate-alpha-4-amino-4-deoxy-L-arabinose arabinosyl transferase</fullName>
        <ecNumber evidence="1">2.4.2.43</ecNumber>
    </recommendedName>
    <alternativeName>
        <fullName evidence="1">4-amino-4-deoxy-L-arabinose lipid A transferase</fullName>
    </alternativeName>
    <alternativeName>
        <fullName evidence="1">Lipid IV(A) 4-amino-4-deoxy-L-arabinosyltransferase</fullName>
    </alternativeName>
    <alternativeName>
        <fullName evidence="1">Undecaprenyl phosphate-alpha-L-Ara4N transferase</fullName>
    </alternativeName>
</protein>
<proteinExistence type="inferred from homology"/>
<organism>
    <name type="scientific">Yersinia enterocolitica serotype O:8 / biotype 1B (strain NCTC 13174 / 8081)</name>
    <dbReference type="NCBI Taxonomy" id="393305"/>
    <lineage>
        <taxon>Bacteria</taxon>
        <taxon>Pseudomonadati</taxon>
        <taxon>Pseudomonadota</taxon>
        <taxon>Gammaproteobacteria</taxon>
        <taxon>Enterobacterales</taxon>
        <taxon>Yersiniaceae</taxon>
        <taxon>Yersinia</taxon>
    </lineage>
</organism>
<feature type="chain" id="PRO_1000065668" description="Undecaprenyl phosphate-alpha-4-amino-4-deoxy-L-arabinose arabinosyl transferase">
    <location>
        <begin position="1"/>
        <end position="554"/>
    </location>
</feature>
<feature type="transmembrane region" description="Helical" evidence="1">
    <location>
        <begin position="4"/>
        <end position="24"/>
    </location>
</feature>
<feature type="transmembrane region" description="Helical" evidence="1">
    <location>
        <begin position="87"/>
        <end position="107"/>
    </location>
</feature>
<feature type="transmembrane region" description="Helical" evidence="1">
    <location>
        <begin position="115"/>
        <end position="135"/>
    </location>
</feature>
<feature type="transmembrane region" description="Helical" evidence="1">
    <location>
        <begin position="178"/>
        <end position="198"/>
    </location>
</feature>
<feature type="transmembrane region" description="Helical" evidence="1">
    <location>
        <begin position="206"/>
        <end position="226"/>
    </location>
</feature>
<feature type="transmembrane region" description="Helical" evidence="1">
    <location>
        <begin position="262"/>
        <end position="282"/>
    </location>
</feature>
<feature type="transmembrane region" description="Helical" evidence="1">
    <location>
        <begin position="293"/>
        <end position="313"/>
    </location>
</feature>
<feature type="transmembrane region" description="Helical" evidence="1">
    <location>
        <begin position="315"/>
        <end position="335"/>
    </location>
</feature>
<feature type="transmembrane region" description="Helical" evidence="1">
    <location>
        <begin position="352"/>
        <end position="372"/>
    </location>
</feature>
<feature type="transmembrane region" description="Helical" evidence="1">
    <location>
        <begin position="384"/>
        <end position="404"/>
    </location>
</feature>
<feature type="transmembrane region" description="Helical" evidence="1">
    <location>
        <begin position="410"/>
        <end position="430"/>
    </location>
</feature>
<evidence type="ECO:0000255" key="1">
    <source>
        <dbReference type="HAMAP-Rule" id="MF_01165"/>
    </source>
</evidence>
<accession>A1JPM4</accession>